<organism>
    <name type="scientific">Cupriavidus metallidurans (strain ATCC 43123 / DSM 2839 / NBRC 102507 / CH34)</name>
    <name type="common">Ralstonia metallidurans</name>
    <dbReference type="NCBI Taxonomy" id="266264"/>
    <lineage>
        <taxon>Bacteria</taxon>
        <taxon>Pseudomonadati</taxon>
        <taxon>Pseudomonadota</taxon>
        <taxon>Betaproteobacteria</taxon>
        <taxon>Burkholderiales</taxon>
        <taxon>Burkholderiaceae</taxon>
        <taxon>Cupriavidus</taxon>
    </lineage>
</organism>
<evidence type="ECO:0000255" key="1"/>
<evidence type="ECO:0000255" key="2">
    <source>
        <dbReference type="PROSITE-ProRule" id="PRU00102"/>
    </source>
</evidence>
<evidence type="ECO:0000255" key="3">
    <source>
        <dbReference type="PROSITE-ProRule" id="PRU00107"/>
    </source>
</evidence>
<evidence type="ECO:0000305" key="4"/>
<dbReference type="EC" id="2.7.13.3"/>
<dbReference type="EMBL" id="X71400">
    <property type="protein sequence ID" value="CAI11247.1"/>
    <property type="molecule type" value="Genomic_DNA"/>
</dbReference>
<dbReference type="EMBL" id="X98451">
    <property type="protein sequence ID" value="CAA67087.1"/>
    <property type="molecule type" value="Genomic_DNA"/>
</dbReference>
<dbReference type="EMBL" id="CP000354">
    <property type="protein sequence ID" value="ABF12836.1"/>
    <property type="molecule type" value="Genomic_DNA"/>
</dbReference>
<dbReference type="RefSeq" id="WP_011229349.1">
    <property type="nucleotide sequence ID" value="NC_007971.2"/>
</dbReference>
<dbReference type="RefSeq" id="YP_145598.1">
    <property type="nucleotide sequence ID" value="NC_006466.1"/>
</dbReference>
<dbReference type="SMR" id="Q44007"/>
<dbReference type="GeneID" id="98407031"/>
<dbReference type="KEGG" id="rme:Rmet_5977"/>
<dbReference type="HOGENOM" id="CLU_000445_89_6_4"/>
<dbReference type="BRENDA" id="2.7.13.3">
    <property type="organism ID" value="231"/>
</dbReference>
<dbReference type="Proteomes" id="UP000002429">
    <property type="component" value="Plasmid pMOL30"/>
</dbReference>
<dbReference type="GO" id="GO:0005886">
    <property type="term" value="C:plasma membrane"/>
    <property type="evidence" value="ECO:0007669"/>
    <property type="project" value="UniProtKB-SubCell"/>
</dbReference>
<dbReference type="GO" id="GO:0005524">
    <property type="term" value="F:ATP binding"/>
    <property type="evidence" value="ECO:0007669"/>
    <property type="project" value="UniProtKB-KW"/>
</dbReference>
<dbReference type="GO" id="GO:0000155">
    <property type="term" value="F:phosphorelay sensor kinase activity"/>
    <property type="evidence" value="ECO:0007669"/>
    <property type="project" value="InterPro"/>
</dbReference>
<dbReference type="CDD" id="cd00075">
    <property type="entry name" value="HATPase"/>
    <property type="match status" value="1"/>
</dbReference>
<dbReference type="CDD" id="cd00082">
    <property type="entry name" value="HisKA"/>
    <property type="match status" value="1"/>
</dbReference>
<dbReference type="Gene3D" id="1.10.287.130">
    <property type="match status" value="1"/>
</dbReference>
<dbReference type="Gene3D" id="6.10.340.10">
    <property type="match status" value="1"/>
</dbReference>
<dbReference type="Gene3D" id="3.30.565.10">
    <property type="entry name" value="Histidine kinase-like ATPase, C-terminal domain"/>
    <property type="match status" value="1"/>
</dbReference>
<dbReference type="InterPro" id="IPR048590">
    <property type="entry name" value="CusS-like_sensor"/>
</dbReference>
<dbReference type="InterPro" id="IPR006290">
    <property type="entry name" value="CztS_silS_copS"/>
</dbReference>
<dbReference type="InterPro" id="IPR003660">
    <property type="entry name" value="HAMP_dom"/>
</dbReference>
<dbReference type="InterPro" id="IPR036890">
    <property type="entry name" value="HATPase_C_sf"/>
</dbReference>
<dbReference type="InterPro" id="IPR005467">
    <property type="entry name" value="His_kinase_dom"/>
</dbReference>
<dbReference type="InterPro" id="IPR003661">
    <property type="entry name" value="HisK_dim/P_dom"/>
</dbReference>
<dbReference type="InterPro" id="IPR036097">
    <property type="entry name" value="HisK_dim/P_sf"/>
</dbReference>
<dbReference type="InterPro" id="IPR004358">
    <property type="entry name" value="Sig_transdc_His_kin-like_C"/>
</dbReference>
<dbReference type="InterPro" id="IPR050428">
    <property type="entry name" value="TCS_sensor_his_kinase"/>
</dbReference>
<dbReference type="NCBIfam" id="TIGR01386">
    <property type="entry name" value="cztS_silS_copS"/>
    <property type="match status" value="1"/>
</dbReference>
<dbReference type="PANTHER" id="PTHR45436:SF3">
    <property type="entry name" value="SENSOR HISTIDINE KINASE HPRS"/>
    <property type="match status" value="1"/>
</dbReference>
<dbReference type="PANTHER" id="PTHR45436">
    <property type="entry name" value="SENSOR HISTIDINE KINASE YKOH"/>
    <property type="match status" value="1"/>
</dbReference>
<dbReference type="Pfam" id="PF21085">
    <property type="entry name" value="CusS"/>
    <property type="match status" value="1"/>
</dbReference>
<dbReference type="Pfam" id="PF00672">
    <property type="entry name" value="HAMP"/>
    <property type="match status" value="1"/>
</dbReference>
<dbReference type="Pfam" id="PF02518">
    <property type="entry name" value="HATPase_c"/>
    <property type="match status" value="1"/>
</dbReference>
<dbReference type="Pfam" id="PF00512">
    <property type="entry name" value="HisKA"/>
    <property type="match status" value="1"/>
</dbReference>
<dbReference type="PRINTS" id="PR00344">
    <property type="entry name" value="BCTRLSENSOR"/>
</dbReference>
<dbReference type="SMART" id="SM00304">
    <property type="entry name" value="HAMP"/>
    <property type="match status" value="1"/>
</dbReference>
<dbReference type="SMART" id="SM00387">
    <property type="entry name" value="HATPase_c"/>
    <property type="match status" value="1"/>
</dbReference>
<dbReference type="SMART" id="SM00388">
    <property type="entry name" value="HisKA"/>
    <property type="match status" value="1"/>
</dbReference>
<dbReference type="SUPFAM" id="SSF55874">
    <property type="entry name" value="ATPase domain of HSP90 chaperone/DNA topoisomerase II/histidine kinase"/>
    <property type="match status" value="1"/>
</dbReference>
<dbReference type="SUPFAM" id="SSF47384">
    <property type="entry name" value="Homodimeric domain of signal transducing histidine kinase"/>
    <property type="match status" value="1"/>
</dbReference>
<dbReference type="PROSITE" id="PS50885">
    <property type="entry name" value="HAMP"/>
    <property type="match status" value="1"/>
</dbReference>
<dbReference type="PROSITE" id="PS50109">
    <property type="entry name" value="HIS_KIN"/>
    <property type="match status" value="1"/>
</dbReference>
<proteinExistence type="evidence at transcript level"/>
<accession>Q44007</accession>
<accession>Q58AM0</accession>
<feature type="signal peptide" evidence="1">
    <location>
        <begin position="1"/>
        <end position="35"/>
    </location>
</feature>
<feature type="chain" id="PRO_0000074746" description="Sensor protein CzcS">
    <location>
        <begin position="36"/>
        <end position="476"/>
    </location>
</feature>
<feature type="topological domain" description="Periplasmic" evidence="1">
    <location>
        <begin position="37"/>
        <end position="158"/>
    </location>
</feature>
<feature type="transmembrane region" description="Helical" evidence="1">
    <location>
        <begin position="159"/>
        <end position="179"/>
    </location>
</feature>
<feature type="topological domain" description="Cytoplasmic" evidence="1">
    <location>
        <begin position="180"/>
        <end position="476"/>
    </location>
</feature>
<feature type="domain" description="HAMP" evidence="2">
    <location>
        <begin position="181"/>
        <end position="234"/>
    </location>
</feature>
<feature type="domain" description="Histidine kinase" evidence="3">
    <location>
        <begin position="242"/>
        <end position="455"/>
    </location>
</feature>
<feature type="modified residue" description="Phosphohistidine; by autocatalysis" evidence="3">
    <location>
        <position position="245"/>
    </location>
</feature>
<feature type="sequence conflict" description="In Ref. 1; CAA67087." evidence="4" ref="1">
    <original>EAA</original>
    <variation>DR</variation>
    <location>
        <begin position="377"/>
        <end position="379"/>
    </location>
</feature>
<comment type="function">
    <text>Member of the two-component regulatory system CzcS/CzcR involved in the control of cobalt, zinc and cadmium homeostasis. Probably activates CzcR by phosphorylation.</text>
</comment>
<comment type="catalytic activity">
    <reaction>
        <text>ATP + protein L-histidine = ADP + protein N-phospho-L-histidine.</text>
        <dbReference type="EC" id="2.7.13.3"/>
    </reaction>
</comment>
<comment type="subcellular location">
    <subcellularLocation>
        <location evidence="4">Cell inner membrane</location>
        <topology evidence="4">Single-pass membrane protein</topology>
    </subcellularLocation>
</comment>
<comment type="induction">
    <text>By cadmium, lead, and zinc.</text>
</comment>
<keyword id="KW-0067">ATP-binding</keyword>
<keyword id="KW-0104">Cadmium</keyword>
<keyword id="KW-0997">Cell inner membrane</keyword>
<keyword id="KW-1003">Cell membrane</keyword>
<keyword id="KW-0170">Cobalt</keyword>
<keyword id="KW-0418">Kinase</keyword>
<keyword id="KW-0472">Membrane</keyword>
<keyword id="KW-0547">Nucleotide-binding</keyword>
<keyword id="KW-0597">Phosphoprotein</keyword>
<keyword id="KW-0614">Plasmid</keyword>
<keyword id="KW-1185">Reference proteome</keyword>
<keyword id="KW-0732">Signal</keyword>
<keyword id="KW-0808">Transferase</keyword>
<keyword id="KW-0812">Transmembrane</keyword>
<keyword id="KW-1133">Transmembrane helix</keyword>
<keyword id="KW-0902">Two-component regulatory system</keyword>
<keyword id="KW-0862">Zinc</keyword>
<sequence>MRPGTSITPLSLTRRLGLFFALVLSIALASMGAFAYYSLAAQLEARDDEVVKGKLEQVEHFLREVDGVQGVPAAQHRFDDLVRGYSDLIVRVTALDGRLLFRTGNDALLEGTDQAAVTGKSSLMFQSADAVLGRDGTRATVFVAKSGEDRKQVTARFRTTLVLGTTVGVILTALVGAAITRRELEPAHVLIKQINRISVERLSYRVDMPPKPTEVRDIASAFNAMLQRLEDGYQKLSRFSADLAHDLRTPLNNLIGHAEVALSRDRTGPEYVALVEESLVEYQRLARMIDAMLFLARADSANVALELTELQLNAELRKLSAYFSVLAEERSVVIRVSGDATLVADAILFQRAINNVLSNAVRHAWPNSMIDLVVRREAAHCCIDITNVGDPIPERELSLIFDRFFRGDRARSNSSQSTGLGLAIVLSIMELHGGDASAVSGLDGKTRFTLRFPLNGAEASARVSVGRPSQDRPVVG</sequence>
<protein>
    <recommendedName>
        <fullName>Sensor protein CzcS</fullName>
        <ecNumber>2.7.13.3</ecNumber>
    </recommendedName>
</protein>
<geneLocation type="plasmid">
    <name>pMOL30</name>
</geneLocation>
<name>CZCS_CUPMC</name>
<reference key="1">
    <citation type="journal article" date="1997" name="Mol. Microbiol.">
        <title>Two-component regulatory system involved in transcriptional control of heavy-metal homoeostasis in Alcaligenes eutrophus.</title>
        <authorList>
            <person name="van der Lelie D."/>
            <person name="Schwuchow T."/>
            <person name="Schwidetzky T."/>
            <person name="Wuertz S."/>
            <person name="Baeyens W."/>
            <person name="Mergeay M."/>
            <person name="Nies D.H."/>
        </authorList>
    </citation>
    <scope>NUCLEOTIDE SEQUENCE [GENOMIC DNA]</scope>
</reference>
<reference key="2">
    <citation type="submission" date="2004-11" db="EMBL/GenBank/DDBJ databases">
        <title>Sequence and features of the Ralstonia metallidurans CH34 heavy metals plasmids pMOL28 and pMOL30.</title>
        <authorList>
            <person name="Monchy S."/>
            <person name="van der Lelie D."/>
            <person name="Vallaeys T."/>
            <person name="Taghavi S."/>
            <person name="Benotmane M."/>
            <person name="McCorkle S."/>
            <person name="Dunn J."/>
            <person name="Lapidus A."/>
            <person name="Mergeay M."/>
        </authorList>
    </citation>
    <scope>NUCLEOTIDE SEQUENCE [LARGE SCALE GENOMIC DNA]</scope>
</reference>
<reference key="3">
    <citation type="journal article" date="2010" name="PLoS ONE">
        <title>The complete genome sequence of Cupriavidus metallidurans strain CH34, a master survivalist in harsh and anthropogenic environments.</title>
        <authorList>
            <person name="Janssen P.J."/>
            <person name="Van Houdt R."/>
            <person name="Moors H."/>
            <person name="Monsieurs P."/>
            <person name="Morin N."/>
            <person name="Michaux A."/>
            <person name="Benotmane M.A."/>
            <person name="Leys N."/>
            <person name="Vallaeys T."/>
            <person name="Lapidus A."/>
            <person name="Monchy S."/>
            <person name="Medigue C."/>
            <person name="Taghavi S."/>
            <person name="McCorkle S."/>
            <person name="Dunn J."/>
            <person name="van der Lelie D."/>
            <person name="Mergeay M."/>
        </authorList>
    </citation>
    <scope>NUCLEOTIDE SEQUENCE [LARGE SCALE GENOMIC DNA]</scope>
    <source>
        <strain>ATCC 43123 / DSM 2839 / NBRC 102507 / CH34</strain>
    </source>
</reference>
<gene>
    <name type="primary">czcS</name>
    <name type="ordered locus">Rmet_5977</name>
</gene>